<comment type="function">
    <text evidence="4 5 6 7">Polynucleotide kinase that can phosphorylate the 5'-hydroxyl groups of double-stranded RNA (dsRNA), single-stranded RNA (ssRNA), double-stranded DNA (dsDNA) and double-stranded DNA:RNA hybrids. dsRNA is phosphorylated more efficiently than dsDNA, and the RNA component of a DNA:RNA hybrid is phosphorylated more efficiently than the DNA component. Plays a key role in both tRNA splicing and mRNA 3'-end formation. Component of the tRNA splicing endonuclease complex: phosphorylates the 5'-terminus of the tRNA 3'-exon during tRNA splicing; this phosphorylation event is a prerequisite for the subsequent ligation of the two exon halves and the production of a mature tRNA (PubMed:24766809, PubMed:24766810). Its role in tRNA splicing and maturation is required for cerebellar development (PubMed:24766809, PubMed:24766810). Component of the pre-mRNA cleavage complex II (CF-II), which seems to be required for mRNA 3'-end formation. Also phosphorylates the 5'-terminus of exogenously introduced short interfering RNAs (siRNAs), which is a necessary prerequisite for their incorporation into the RNA-induced silencing complex (RISC). However, endogenous siRNAs and microRNAs (miRNAs) that are produced by the cleavage of dsRNA precursors by DICER1 already contain a 5'-phosphate group, so this protein may be dispensible for normal RNA-mediated gene silencing.</text>
</comment>
<comment type="catalytic activity">
    <reaction evidence="1">
        <text>a 5'-end dephospho-2'-deoxyribonucleoside-DNA + ATP = a 5'-end 5'-phospho-2'-deoxyribonucleoside-DNA + ADP + H(+)</text>
        <dbReference type="Rhea" id="RHEA:15669"/>
        <dbReference type="Rhea" id="RHEA-COMP:13180"/>
        <dbReference type="Rhea" id="RHEA-COMP:13184"/>
        <dbReference type="ChEBI" id="CHEBI:15378"/>
        <dbReference type="ChEBI" id="CHEBI:30616"/>
        <dbReference type="ChEBI" id="CHEBI:136412"/>
        <dbReference type="ChEBI" id="CHEBI:136416"/>
        <dbReference type="ChEBI" id="CHEBI:456216"/>
        <dbReference type="EC" id="2.7.1.78"/>
    </reaction>
</comment>
<comment type="catalytic activity">
    <reaction evidence="1">
        <text>a 5'-end dephospho-ribonucleoside-RNA + ATP = a 5'-end 5'-phospho-ribonucleoside-RNA + ADP + H(+)</text>
        <dbReference type="Rhea" id="RHEA:54580"/>
        <dbReference type="Rhea" id="RHEA-COMP:13936"/>
        <dbReference type="Rhea" id="RHEA-COMP:15179"/>
        <dbReference type="ChEBI" id="CHEBI:15378"/>
        <dbReference type="ChEBI" id="CHEBI:30616"/>
        <dbReference type="ChEBI" id="CHEBI:138282"/>
        <dbReference type="ChEBI" id="CHEBI:138284"/>
        <dbReference type="ChEBI" id="CHEBI:456216"/>
        <dbReference type="EC" id="2.7.1.78"/>
    </reaction>
</comment>
<comment type="cofactor">
    <cofactor evidence="1 4">
        <name>Mg(2+)</name>
        <dbReference type="ChEBI" id="CHEBI:18420"/>
    </cofactor>
    <cofactor evidence="1 4">
        <name>Mn(2+)</name>
        <dbReference type="ChEBI" id="CHEBI:29035"/>
    </cofactor>
    <cofactor evidence="1 4">
        <name>Ni(2+)</name>
        <dbReference type="ChEBI" id="CHEBI:49786"/>
    </cofactor>
</comment>
<comment type="subunit">
    <text evidence="3 4 6">Component of the tRNA splicing endonuclease complex, composed of CLP1, TSEN2, TSEN15, TSEN34 and TSEN54 (PubMed:24766809). Component of pre-mRNA cleavage complex II (CF-II). Also associates with numerous components of the pre-mRNA cleavage complex I (CF-I/CFIm), including NUDT21, CPSF2, CPSF3, CPSF6 and CPSF7. Interacts with CSTF2 and SYMPK.</text>
</comment>
<comment type="interaction">
    <interactant intactId="EBI-2559831">
        <id>Q92989</id>
    </interactant>
    <interactant intactId="EBI-3937015">
        <id>Q9UPV0</id>
        <label>CEP164</label>
    </interactant>
    <organismsDiffer>false</organismsDiffer>
    <experiments>3</experiments>
</comment>
<comment type="interaction">
    <interactant intactId="EBI-2559831">
        <id>Q92989</id>
    </interactant>
    <interactant intactId="EBI-721948">
        <id>Q8NCG7</id>
        <label>DAGLB</label>
    </interactant>
    <organismsDiffer>false</organismsDiffer>
    <experiments>3</experiments>
</comment>
<comment type="interaction">
    <interactant intactId="EBI-2559831">
        <id>Q92989</id>
    </interactant>
    <interactant intactId="EBI-11479104">
        <id>O43320</id>
        <label>FGF16</label>
    </interactant>
    <organismsDiffer>false</organismsDiffer>
    <experiments>3</experiments>
</comment>
<comment type="interaction">
    <interactant intactId="EBI-2559831">
        <id>Q92989</id>
    </interactant>
    <interactant intactId="EBI-18138793">
        <id>Q9C0B1-2</id>
        <label>FTO</label>
    </interactant>
    <organismsDiffer>false</organismsDiffer>
    <experiments>3</experiments>
</comment>
<comment type="interaction">
    <interactant intactId="EBI-2559831">
        <id>Q92989</id>
    </interactant>
    <interactant intactId="EBI-16439278">
        <id>Q6FHY5</id>
        <label>MEOX2</label>
    </interactant>
    <organismsDiffer>false</organismsDiffer>
    <experiments>3</experiments>
</comment>
<comment type="interaction">
    <interactant intactId="EBI-2559831">
        <id>Q92989</id>
    </interactant>
    <interactant intactId="EBI-6165891">
        <id>Q14696</id>
        <label>MESD</label>
    </interactant>
    <organismsDiffer>false</organismsDiffer>
    <experiments>3</experiments>
</comment>
<comment type="interaction">
    <interactant intactId="EBI-2559831">
        <id>Q92989</id>
    </interactant>
    <interactant intactId="EBI-2559809">
        <id>O94913</id>
        <label>PCF11</label>
    </interactant>
    <organismsDiffer>false</organismsDiffer>
    <experiments>3</experiments>
</comment>
<comment type="interaction">
    <interactant intactId="EBI-2559831">
        <id>Q92989</id>
    </interactant>
    <interactant intactId="EBI-12386584">
        <id>P22061-2</id>
        <label>PCMT1</label>
    </interactant>
    <organismsDiffer>false</organismsDiffer>
    <experiments>3</experiments>
</comment>
<comment type="interaction">
    <interactant intactId="EBI-2559831">
        <id>Q92989</id>
    </interactant>
    <interactant intactId="EBI-2803328">
        <id>P79522</id>
        <label>PRR3</label>
    </interactant>
    <organismsDiffer>false</organismsDiffer>
    <experiments>3</experiments>
</comment>
<comment type="interaction">
    <interactant intactId="EBI-2559831">
        <id>Q92989</id>
    </interactant>
    <interactant intactId="EBI-357828">
        <id>P28074</id>
        <label>PSMB5</label>
    </interactant>
    <organismsDiffer>false</organismsDiffer>
    <experiments>3</experiments>
</comment>
<comment type="interaction">
    <interactant intactId="EBI-2559831">
        <id>Q92989</id>
    </interactant>
    <interactant intactId="EBI-747719">
        <id>Q96H20</id>
        <label>SNF8</label>
    </interactant>
    <organismsDiffer>false</organismsDiffer>
    <experiments>3</experiments>
</comment>
<comment type="interaction">
    <interactant intactId="EBI-2559831">
        <id>Q92989</id>
    </interactant>
    <interactant intactId="EBI-2559824">
        <id>Q7Z6J9</id>
        <label>TSEN54</label>
    </interactant>
    <organismsDiffer>false</organismsDiffer>
    <experiments>7</experiments>
</comment>
<comment type="interaction">
    <interactant intactId="EBI-2559831">
        <id>Q92989</id>
    </interactant>
    <interactant intactId="EBI-716093">
        <id>P13994</id>
        <label>YJU2B</label>
    </interactant>
    <organismsDiffer>false</organismsDiffer>
    <experiments>3</experiments>
</comment>
<comment type="subcellular location">
    <subcellularLocation>
        <location evidence="1 2 7">Nucleus</location>
    </subcellularLocation>
</comment>
<comment type="alternative products">
    <event type="alternative splicing"/>
    <isoform>
        <id>Q92989-1</id>
        <name>1</name>
        <sequence type="displayed"/>
    </isoform>
    <isoform>
        <id>Q92989-2</id>
        <name>2</name>
        <sequence type="described" ref="VSP_041164"/>
    </isoform>
</comment>
<comment type="disease" evidence="6 7">
    <disease id="DI-04087">
        <name>Pontocerebellar hypoplasia 10</name>
        <acronym>PCH10</acronym>
        <description>A form of pontocerebellar hypoplasia, a disorder characterized by structural defects of the pons and cerebellum, evident upon brain imaging. PCH10 features include cortical dysgenesis marked by a simplified gyral pattern, cortical atrophy, mild or focal cerebellar vermian volume loss, delayed myelination, progressive microcephaly, global growth and developmental delays, severe intellectual disabilities, and seizures refractory to treatment.</description>
        <dbReference type="MIM" id="615803"/>
    </disease>
    <text evidence="6 7">The disease is caused by variants affecting the gene represented in this entry. Neurodegeneration is due to defects in tRNA splicing (PubMed:24766809, PubMed:24766810).</text>
</comment>
<comment type="similarity">
    <text evidence="1">Belongs to the Clp1 family. Clp1 subfamily.</text>
</comment>
<feature type="chain" id="PRO_0000089863" description="Polyribonucleotide 5'-hydroxyl-kinase Clp1">
    <location>
        <begin position="1"/>
        <end position="425"/>
    </location>
</feature>
<feature type="binding site" evidence="1">
    <location>
        <position position="22"/>
    </location>
    <ligand>
        <name>ATP</name>
        <dbReference type="ChEBI" id="CHEBI:30616"/>
    </ligand>
</feature>
<feature type="binding site" evidence="1">
    <location>
        <position position="62"/>
    </location>
    <ligand>
        <name>ATP</name>
        <dbReference type="ChEBI" id="CHEBI:30616"/>
    </ligand>
</feature>
<feature type="binding site" evidence="1">
    <location>
        <begin position="124"/>
        <end position="129"/>
    </location>
    <ligand>
        <name>ATP</name>
        <dbReference type="ChEBI" id="CHEBI:30616"/>
    </ligand>
</feature>
<feature type="splice variant" id="VSP_041164" description="In isoform 2." evidence="8">
    <location>
        <begin position="139"/>
        <end position="202"/>
    </location>
</feature>
<feature type="sequence variant" id="VAR_070952" description="In PCH10; decreases kinase activity, impairs formation of the tRNA splicing endonuclease complex and impairs ability to mediate tRNA splicing and maturation; dbSNP:rs587777616." evidence="6 7">
    <original>R</original>
    <variation>H</variation>
    <location>
        <position position="140"/>
    </location>
</feature>
<feature type="mutagenesis site" description="Abrogates RNA kinase activity. Abrogates complementation of tRNA splicing activity in yeast; when associated with A-128." evidence="4 5">
    <original>KS</original>
    <variation>AA</variation>
    <location>
        <begin position="127"/>
        <end position="128"/>
    </location>
</feature>
<feature type="mutagenesis site" description="Abrogates RNA kinase activity and tRNA splicing activity." evidence="6">
    <original>K</original>
    <variation>A</variation>
    <location>
        <position position="127"/>
    </location>
</feature>
<feature type="mutagenesis site" description="Abrogates complementation of tRNA splicing activity in yeast." evidence="5">
    <original>D</original>
    <variation>A</variation>
    <location>
        <position position="151"/>
    </location>
</feature>
<feature type="strand" evidence="10">
    <location>
        <begin position="12"/>
        <end position="17"/>
    </location>
</feature>
<feature type="strand" evidence="10">
    <location>
        <begin position="19"/>
        <end position="26"/>
    </location>
</feature>
<feature type="strand" evidence="10">
    <location>
        <begin position="33"/>
        <end position="40"/>
    </location>
</feature>
<feature type="strand" evidence="10">
    <location>
        <begin position="55"/>
        <end position="57"/>
    </location>
</feature>
<feature type="strand" evidence="10">
    <location>
        <begin position="62"/>
        <end position="69"/>
    </location>
</feature>
<feature type="strand" evidence="10">
    <location>
        <begin position="71"/>
        <end position="77"/>
    </location>
</feature>
<feature type="strand" evidence="10">
    <location>
        <begin position="80"/>
        <end position="85"/>
    </location>
</feature>
<feature type="helix" evidence="10">
    <location>
        <begin position="90"/>
        <end position="107"/>
    </location>
</feature>
<feature type="turn" evidence="10">
    <location>
        <begin position="108"/>
        <end position="111"/>
    </location>
</feature>
<feature type="strand" evidence="10">
    <location>
        <begin position="116"/>
        <end position="120"/>
    </location>
</feature>
<feature type="strand" evidence="10">
    <location>
        <begin position="123"/>
        <end position="125"/>
    </location>
</feature>
<feature type="helix" evidence="10">
    <location>
        <begin position="127"/>
        <end position="140"/>
    </location>
</feature>
<feature type="strand" evidence="10">
    <location>
        <begin position="146"/>
        <end position="149"/>
    </location>
</feature>
<feature type="turn" evidence="9">
    <location>
        <begin position="152"/>
        <end position="154"/>
    </location>
</feature>
<feature type="strand" evidence="10">
    <location>
        <begin position="156"/>
        <end position="167"/>
    </location>
</feature>
<feature type="strand" evidence="10">
    <location>
        <begin position="174"/>
        <end position="176"/>
    </location>
</feature>
<feature type="strand" evidence="10">
    <location>
        <begin position="184"/>
        <end position="187"/>
    </location>
</feature>
<feature type="strand" evidence="9">
    <location>
        <begin position="190"/>
        <end position="192"/>
    </location>
</feature>
<feature type="helix" evidence="9">
    <location>
        <begin position="193"/>
        <end position="195"/>
    </location>
</feature>
<feature type="helix" evidence="10">
    <location>
        <begin position="197"/>
        <end position="217"/>
    </location>
</feature>
<feature type="helix" evidence="10">
    <location>
        <begin position="219"/>
        <end position="224"/>
    </location>
</feature>
<feature type="strand" evidence="10">
    <location>
        <begin position="226"/>
        <end position="229"/>
    </location>
</feature>
<feature type="helix" evidence="10">
    <location>
        <begin position="238"/>
        <end position="248"/>
    </location>
</feature>
<feature type="strand" evidence="10">
    <location>
        <begin position="253"/>
        <end position="258"/>
    </location>
</feature>
<feature type="helix" evidence="10">
    <location>
        <begin position="260"/>
        <end position="266"/>
    </location>
</feature>
<feature type="strand" evidence="10">
    <location>
        <begin position="274"/>
        <end position="279"/>
    </location>
</feature>
<feature type="helix" evidence="10">
    <location>
        <begin position="290"/>
        <end position="305"/>
    </location>
</feature>
<feature type="helix" evidence="10">
    <location>
        <begin position="308"/>
        <end position="310"/>
    </location>
</feature>
<feature type="strand" evidence="10">
    <location>
        <begin position="315"/>
        <end position="320"/>
    </location>
</feature>
<feature type="turn" evidence="10">
    <location>
        <begin position="321"/>
        <end position="323"/>
    </location>
</feature>
<feature type="strand" evidence="9">
    <location>
        <begin position="325"/>
        <end position="328"/>
    </location>
</feature>
<feature type="helix" evidence="10">
    <location>
        <begin position="359"/>
        <end position="361"/>
    </location>
</feature>
<feature type="strand" evidence="10">
    <location>
        <begin position="365"/>
        <end position="369"/>
    </location>
</feature>
<feature type="strand" evidence="10">
    <location>
        <begin position="383"/>
        <end position="391"/>
    </location>
</feature>
<feature type="turn" evidence="10">
    <location>
        <begin position="394"/>
        <end position="397"/>
    </location>
</feature>
<feature type="strand" evidence="10">
    <location>
        <begin position="398"/>
        <end position="405"/>
    </location>
</feature>
<feature type="strand" evidence="10">
    <location>
        <begin position="412"/>
        <end position="416"/>
    </location>
</feature>
<accession>Q92989</accession>
<accession>B2R7J6</accession>
<accession>B4DTI8</accession>
<proteinExistence type="evidence at protein level"/>
<reference key="1">
    <citation type="journal article" date="1996" name="Blood">
        <title>AF10 is split by MLL and HEAB, a human homolog to a putative Caenorhabditis elegans ATP/GTP-binding protein in an invins(10;11)(p12;q23q12).</title>
        <authorList>
            <person name="Tanabe S."/>
            <person name="Bohlander S.K."/>
            <person name="Vignon C.V."/>
            <person name="Espinosa R. III"/>
            <person name="Zhao N."/>
            <person name="Strissel P.L."/>
            <person name="Zeleznik-Le N.J."/>
            <person name="Rowley J.D."/>
        </authorList>
    </citation>
    <scope>NUCLEOTIDE SEQUENCE [MRNA] (ISOFORM 1)</scope>
</reference>
<reference key="2">
    <citation type="journal article" date="2004" name="Nat. Genet.">
        <title>Complete sequencing and characterization of 21,243 full-length human cDNAs.</title>
        <authorList>
            <person name="Ota T."/>
            <person name="Suzuki Y."/>
            <person name="Nishikawa T."/>
            <person name="Otsuki T."/>
            <person name="Sugiyama T."/>
            <person name="Irie R."/>
            <person name="Wakamatsu A."/>
            <person name="Hayashi K."/>
            <person name="Sato H."/>
            <person name="Nagai K."/>
            <person name="Kimura K."/>
            <person name="Makita H."/>
            <person name="Sekine M."/>
            <person name="Obayashi M."/>
            <person name="Nishi T."/>
            <person name="Shibahara T."/>
            <person name="Tanaka T."/>
            <person name="Ishii S."/>
            <person name="Yamamoto J."/>
            <person name="Saito K."/>
            <person name="Kawai Y."/>
            <person name="Isono Y."/>
            <person name="Nakamura Y."/>
            <person name="Nagahari K."/>
            <person name="Murakami K."/>
            <person name="Yasuda T."/>
            <person name="Iwayanagi T."/>
            <person name="Wagatsuma M."/>
            <person name="Shiratori A."/>
            <person name="Sudo H."/>
            <person name="Hosoiri T."/>
            <person name="Kaku Y."/>
            <person name="Kodaira H."/>
            <person name="Kondo H."/>
            <person name="Sugawara M."/>
            <person name="Takahashi M."/>
            <person name="Kanda K."/>
            <person name="Yokoi T."/>
            <person name="Furuya T."/>
            <person name="Kikkawa E."/>
            <person name="Omura Y."/>
            <person name="Abe K."/>
            <person name="Kamihara K."/>
            <person name="Katsuta N."/>
            <person name="Sato K."/>
            <person name="Tanikawa M."/>
            <person name="Yamazaki M."/>
            <person name="Ninomiya K."/>
            <person name="Ishibashi T."/>
            <person name="Yamashita H."/>
            <person name="Murakawa K."/>
            <person name="Fujimori K."/>
            <person name="Tanai H."/>
            <person name="Kimata M."/>
            <person name="Watanabe M."/>
            <person name="Hiraoka S."/>
            <person name="Chiba Y."/>
            <person name="Ishida S."/>
            <person name="Ono Y."/>
            <person name="Takiguchi S."/>
            <person name="Watanabe S."/>
            <person name="Yosida M."/>
            <person name="Hotuta T."/>
            <person name="Kusano J."/>
            <person name="Kanehori K."/>
            <person name="Takahashi-Fujii A."/>
            <person name="Hara H."/>
            <person name="Tanase T.-O."/>
            <person name="Nomura Y."/>
            <person name="Togiya S."/>
            <person name="Komai F."/>
            <person name="Hara R."/>
            <person name="Takeuchi K."/>
            <person name="Arita M."/>
            <person name="Imose N."/>
            <person name="Musashino K."/>
            <person name="Yuuki H."/>
            <person name="Oshima A."/>
            <person name="Sasaki N."/>
            <person name="Aotsuka S."/>
            <person name="Yoshikawa Y."/>
            <person name="Matsunawa H."/>
            <person name="Ichihara T."/>
            <person name="Shiohata N."/>
            <person name="Sano S."/>
            <person name="Moriya S."/>
            <person name="Momiyama H."/>
            <person name="Satoh N."/>
            <person name="Takami S."/>
            <person name="Terashima Y."/>
            <person name="Suzuki O."/>
            <person name="Nakagawa S."/>
            <person name="Senoh A."/>
            <person name="Mizoguchi H."/>
            <person name="Goto Y."/>
            <person name="Shimizu F."/>
            <person name="Wakebe H."/>
            <person name="Hishigaki H."/>
            <person name="Watanabe T."/>
            <person name="Sugiyama A."/>
            <person name="Takemoto M."/>
            <person name="Kawakami B."/>
            <person name="Yamazaki M."/>
            <person name="Watanabe K."/>
            <person name="Kumagai A."/>
            <person name="Itakura S."/>
            <person name="Fukuzumi Y."/>
            <person name="Fujimori Y."/>
            <person name="Komiyama M."/>
            <person name="Tashiro H."/>
            <person name="Tanigami A."/>
            <person name="Fujiwara T."/>
            <person name="Ono T."/>
            <person name="Yamada K."/>
            <person name="Fujii Y."/>
            <person name="Ozaki K."/>
            <person name="Hirao M."/>
            <person name="Ohmori Y."/>
            <person name="Kawabata A."/>
            <person name="Hikiji T."/>
            <person name="Kobatake N."/>
            <person name="Inagaki H."/>
            <person name="Ikema Y."/>
            <person name="Okamoto S."/>
            <person name="Okitani R."/>
            <person name="Kawakami T."/>
            <person name="Noguchi S."/>
            <person name="Itoh T."/>
            <person name="Shigeta K."/>
            <person name="Senba T."/>
            <person name="Matsumura K."/>
            <person name="Nakajima Y."/>
            <person name="Mizuno T."/>
            <person name="Morinaga M."/>
            <person name="Sasaki M."/>
            <person name="Togashi T."/>
            <person name="Oyama M."/>
            <person name="Hata H."/>
            <person name="Watanabe M."/>
            <person name="Komatsu T."/>
            <person name="Mizushima-Sugano J."/>
            <person name="Satoh T."/>
            <person name="Shirai Y."/>
            <person name="Takahashi Y."/>
            <person name="Nakagawa K."/>
            <person name="Okumura K."/>
            <person name="Nagase T."/>
            <person name="Nomura N."/>
            <person name="Kikuchi H."/>
            <person name="Masuho Y."/>
            <person name="Yamashita R."/>
            <person name="Nakai K."/>
            <person name="Yada T."/>
            <person name="Nakamura Y."/>
            <person name="Ohara O."/>
            <person name="Isogai T."/>
            <person name="Sugano S."/>
        </authorList>
    </citation>
    <scope>NUCLEOTIDE SEQUENCE [LARGE SCALE MRNA] (ISOFORMS 1 AND 2)</scope>
    <source>
        <tissue>Cerebellum</tissue>
        <tissue>Placenta</tissue>
    </source>
</reference>
<reference key="3">
    <citation type="submission" date="2005-07" db="EMBL/GenBank/DDBJ databases">
        <authorList>
            <person name="Mural R.J."/>
            <person name="Istrail S."/>
            <person name="Sutton G.G."/>
            <person name="Florea L."/>
            <person name="Halpern A.L."/>
            <person name="Mobarry C.M."/>
            <person name="Lippert R."/>
            <person name="Walenz B."/>
            <person name="Shatkay H."/>
            <person name="Dew I."/>
            <person name="Miller J.R."/>
            <person name="Flanigan M.J."/>
            <person name="Edwards N.J."/>
            <person name="Bolanos R."/>
            <person name="Fasulo D."/>
            <person name="Halldorsson B.V."/>
            <person name="Hannenhalli S."/>
            <person name="Turner R."/>
            <person name="Yooseph S."/>
            <person name="Lu F."/>
            <person name="Nusskern D.R."/>
            <person name="Shue B.C."/>
            <person name="Zheng X.H."/>
            <person name="Zhong F."/>
            <person name="Delcher A.L."/>
            <person name="Huson D.H."/>
            <person name="Kravitz S.A."/>
            <person name="Mouchard L."/>
            <person name="Reinert K."/>
            <person name="Remington K.A."/>
            <person name="Clark A.G."/>
            <person name="Waterman M.S."/>
            <person name="Eichler E.E."/>
            <person name="Adams M.D."/>
            <person name="Hunkapiller M.W."/>
            <person name="Myers E.W."/>
            <person name="Venter J.C."/>
        </authorList>
    </citation>
    <scope>NUCLEOTIDE SEQUENCE [LARGE SCALE GENOMIC DNA]</scope>
</reference>
<reference key="4">
    <citation type="journal article" date="2004" name="Genome Res.">
        <title>The status, quality, and expansion of the NIH full-length cDNA project: the Mammalian Gene Collection (MGC).</title>
        <authorList>
            <consortium name="The MGC Project Team"/>
        </authorList>
    </citation>
    <scope>NUCLEOTIDE SEQUENCE [LARGE SCALE MRNA] (ISOFORM 1)</scope>
    <source>
        <tissue>Lung</tissue>
    </source>
</reference>
<reference key="5">
    <citation type="journal article" date="2000" name="EMBO J.">
        <title>Human pre-mRNA cleavage factor II(m) contains homologs of yeast proteins and bridges two other cleavage factors.</title>
        <authorList>
            <person name="de Vries H."/>
            <person name="Rueegsegger U."/>
            <person name="Huebner W."/>
            <person name="Friedlein A."/>
            <person name="Langen H."/>
            <person name="Keller W."/>
        </authorList>
    </citation>
    <scope>IDENTIFICATION BY MASS SPECTROMETRY</scope>
    <scope>IDENTIFICATION AS A COMPONENT OF THE PRE-MRNA CLEAVAGE COMPLEX II</scope>
    <scope>ASSOCIATION WITH THE PRE-MRNA CLEAVAGE COMPLEX I</scope>
    <scope>SUBCELLULAR LOCATION</scope>
</reference>
<reference key="6">
    <citation type="journal article" date="2004" name="Cell">
        <title>Identification of a human endonuclease complex reveals a link between tRNA splicing and pre-mRNA 3' end formation.</title>
        <authorList>
            <person name="Paushkin S.V."/>
            <person name="Patel M."/>
            <person name="Furia B.S."/>
            <person name="Peltz S.W."/>
            <person name="Trotta C.R."/>
        </authorList>
    </citation>
    <scope>IDENTIFICATION BY MASS SPECTROMETRY</scope>
    <scope>IDENTIFICATION IN A COMPLEX WITH TSEN2; TSEN15; TSEN34 AND TSEN54</scope>
    <scope>INTERACTION WITH CSTF2 AND SYMPK</scope>
</reference>
<reference key="7">
    <citation type="journal article" date="2007" name="Nature">
        <title>The human RNA kinase hClp1 is active on 3' transfer RNA exons and short interfering RNAs.</title>
        <authorList>
            <person name="Weitzer S."/>
            <person name="Martinez J."/>
        </authorList>
    </citation>
    <scope>IDENTIFICATION BY MASS SPECTROMETRY</scope>
    <scope>FUNCTION</scope>
    <scope>CATALYTIC ACTIVITY</scope>
    <scope>COFACTOR</scope>
    <scope>IDENTIFICATION IN A COMPLEX WITH TSEN2; TSEN15; TSEN34 AND TSEN54</scope>
    <scope>MUTAGENESIS OF 127-LYS-SER-128</scope>
</reference>
<reference key="8">
    <citation type="journal article" date="2008" name="RNA">
        <title>Human RNA 5'-kinase (hClp1) can function as a tRNA splicing enzyme in vivo.</title>
        <authorList>
            <person name="Ramirez A."/>
            <person name="Shuman S."/>
            <person name="Schwer B."/>
        </authorList>
    </citation>
    <scope>FUNCTION</scope>
    <scope>CATALYTIC ACTIVITY</scope>
    <scope>MUTAGENESIS OF 127-LYS-SER-128 AND ASP-151</scope>
</reference>
<reference key="9">
    <citation type="journal article" date="2012" name="Proc. Natl. Acad. Sci. U.S.A.">
        <title>N-terminal acetylome analyses and functional insights of the N-terminal acetyltransferase NatB.</title>
        <authorList>
            <person name="Van Damme P."/>
            <person name="Lasa M."/>
            <person name="Polevoda B."/>
            <person name="Gazquez C."/>
            <person name="Elosegui-Artola A."/>
            <person name="Kim D.S."/>
            <person name="De Juan-Pardo E."/>
            <person name="Demeyer K."/>
            <person name="Hole K."/>
            <person name="Larrea E."/>
            <person name="Timmerman E."/>
            <person name="Prieto J."/>
            <person name="Arnesen T."/>
            <person name="Sherman F."/>
            <person name="Gevaert K."/>
            <person name="Aldabe R."/>
        </authorList>
    </citation>
    <scope>IDENTIFICATION BY MASS SPECTROMETRY [LARGE SCALE ANALYSIS]</scope>
</reference>
<reference key="10">
    <citation type="journal article" date="2014" name="Cell">
        <title>Human CLP1 mutations alter tRNA biogenesis, affecting both peripheral and central nervous system function.</title>
        <authorList>
            <consortium name="Baylor Hopkins Center for Mendelian Genomics"/>
            <person name="Karaca E."/>
            <person name="Weitzer S."/>
            <person name="Pehlivan D."/>
            <person name="Shiraishi H."/>
            <person name="Gogakos T."/>
            <person name="Hanada T."/>
            <person name="Jhangiani S.N."/>
            <person name="Wiszniewski W."/>
            <person name="Withers M."/>
            <person name="Campbell I.M."/>
            <person name="Erdin S."/>
            <person name="Isikay S."/>
            <person name="Franco L.M."/>
            <person name="Gonzaga-Jauregui C."/>
            <person name="Gambin T."/>
            <person name="Gelowani V."/>
            <person name="Hunter J.V."/>
            <person name="Yesil G."/>
            <person name="Koparir E."/>
            <person name="Yilmaz S."/>
            <person name="Brown M."/>
            <person name="Briskin D."/>
            <person name="Hafner M."/>
            <person name="Morozov P."/>
            <person name="Farazi T.A."/>
            <person name="Bernreuther C."/>
            <person name="Glatzel M."/>
            <person name="Trattnig S."/>
            <person name="Friske J."/>
            <person name="Kronnerwetter C."/>
            <person name="Bainbridge M.N."/>
            <person name="Gezdirici A."/>
            <person name="Seven M."/>
            <person name="Muzny D.M."/>
            <person name="Boerwinkle E."/>
            <person name="Ozen M."/>
            <person name="Clausen T."/>
            <person name="Tuschl T."/>
            <person name="Yuksel A."/>
            <person name="Hess A."/>
            <person name="Gibbs R.A."/>
            <person name="Martinez J."/>
            <person name="Penninger J.M."/>
            <person name="Lupski J.R."/>
        </authorList>
    </citation>
    <scope>VARIANT PCH10 HIS-140</scope>
    <scope>FUNCTION</scope>
    <scope>IDENTIFICATION IN THE TRNA SPLICING ENDONUCLEASE COMPLEX</scope>
    <scope>MUTAGENESIS OF LYS-127</scope>
    <scope>CHARACTERIZATION OF VARIANT PCH10 HIS-140</scope>
</reference>
<reference key="11">
    <citation type="journal article" date="2014" name="Cell">
        <title>CLP1 founder mutation links tRNA splicing and maturation to cerebellar development and neurodegeneration.</title>
        <authorList>
            <person name="Schaffer A.E."/>
            <person name="Eggens V.R."/>
            <person name="Caglayan A.O."/>
            <person name="Reuter M.S."/>
            <person name="Scott E."/>
            <person name="Coufal N.G."/>
            <person name="Silhavy J.L."/>
            <person name="Xue Y."/>
            <person name="Kayserili H."/>
            <person name="Yasuno K."/>
            <person name="Rosti R.O."/>
            <person name="Abdellateef M."/>
            <person name="Caglar C."/>
            <person name="Kasher P.R."/>
            <person name="Cazemier J.L."/>
            <person name="Weterman M.A."/>
            <person name="Cantagrel V."/>
            <person name="Cai N."/>
            <person name="Zweier C."/>
            <person name="Altunoglu U."/>
            <person name="Satkin N.B."/>
            <person name="Aktar F."/>
            <person name="Tuysuz B."/>
            <person name="Yalcinkaya C."/>
            <person name="Caksen H."/>
            <person name="Bilguvar K."/>
            <person name="Fu X.D."/>
            <person name="Trotta C.R."/>
            <person name="Gabriel S."/>
            <person name="Reis A."/>
            <person name="Gunel M."/>
            <person name="Baas F."/>
            <person name="Gleeson J.G."/>
        </authorList>
    </citation>
    <scope>VARIANT PCH10 HIS-140</scope>
    <scope>FUNCTION</scope>
    <scope>SUBCELLULAR LOCATION</scope>
</reference>
<keyword id="KW-0002">3D-structure</keyword>
<keyword id="KW-0025">Alternative splicing</keyword>
<keyword id="KW-0067">ATP-binding</keyword>
<keyword id="KW-0225">Disease variant</keyword>
<keyword id="KW-0418">Kinase</keyword>
<keyword id="KW-0460">Magnesium</keyword>
<keyword id="KW-0464">Manganese</keyword>
<keyword id="KW-0507">mRNA processing</keyword>
<keyword id="KW-0523">Neurodegeneration</keyword>
<keyword id="KW-0533">Nickel</keyword>
<keyword id="KW-0547">Nucleotide-binding</keyword>
<keyword id="KW-0539">Nucleus</keyword>
<keyword id="KW-1267">Proteomics identification</keyword>
<keyword id="KW-1185">Reference proteome</keyword>
<keyword id="KW-0808">Transferase</keyword>
<keyword id="KW-0819">tRNA processing</keyword>
<dbReference type="EC" id="2.7.1.78" evidence="1"/>
<dbReference type="EMBL" id="U73524">
    <property type="protein sequence ID" value="AAC50780.1"/>
    <property type="molecule type" value="mRNA"/>
</dbReference>
<dbReference type="EMBL" id="AK300232">
    <property type="protein sequence ID" value="BAG62000.1"/>
    <property type="molecule type" value="mRNA"/>
</dbReference>
<dbReference type="EMBL" id="AK313007">
    <property type="protein sequence ID" value="BAG35843.1"/>
    <property type="molecule type" value="mRNA"/>
</dbReference>
<dbReference type="EMBL" id="CH471076">
    <property type="protein sequence ID" value="EAW73770.1"/>
    <property type="molecule type" value="Genomic_DNA"/>
</dbReference>
<dbReference type="EMBL" id="BC000446">
    <property type="protein sequence ID" value="AAH00446.1"/>
    <property type="molecule type" value="mRNA"/>
</dbReference>
<dbReference type="CCDS" id="CCDS44600.1">
    <molecule id="Q92989-2"/>
</dbReference>
<dbReference type="CCDS" id="CCDS7964.1">
    <molecule id="Q92989-1"/>
</dbReference>
<dbReference type="RefSeq" id="NP_001136069.1">
    <molecule id="Q92989-2"/>
    <property type="nucleotide sequence ID" value="NM_001142597.2"/>
</dbReference>
<dbReference type="RefSeq" id="NP_006822.1">
    <molecule id="Q92989-1"/>
    <property type="nucleotide sequence ID" value="NM_006831.3"/>
</dbReference>
<dbReference type="PDB" id="8HMY">
    <property type="method" value="EM"/>
    <property type="resolution" value="2.94 A"/>
    <property type="chains" value="E=1-425"/>
</dbReference>
<dbReference type="PDB" id="8HMZ">
    <property type="method" value="EM"/>
    <property type="resolution" value="2.90 A"/>
    <property type="chains" value="E=1-425"/>
</dbReference>
<dbReference type="PDBsum" id="8HMY"/>
<dbReference type="PDBsum" id="8HMZ"/>
<dbReference type="EMDB" id="EMD-34904"/>
<dbReference type="EMDB" id="EMD-34905"/>
<dbReference type="SMR" id="Q92989"/>
<dbReference type="BioGRID" id="116174">
    <property type="interactions" value="83"/>
</dbReference>
<dbReference type="ComplexPortal" id="CPX-2692">
    <property type="entry name" value="pre-mRNA cleavage factor IIm complex"/>
</dbReference>
<dbReference type="ComplexPortal" id="CPX-2707">
    <property type="entry name" value="tRNA-intron splicing endonuclease complex"/>
</dbReference>
<dbReference type="CORUM" id="Q92989"/>
<dbReference type="FunCoup" id="Q92989">
    <property type="interactions" value="3358"/>
</dbReference>
<dbReference type="IntAct" id="Q92989">
    <property type="interactions" value="52"/>
</dbReference>
<dbReference type="MINT" id="Q92989"/>
<dbReference type="STRING" id="9606.ENSP00000434995"/>
<dbReference type="GlyGen" id="Q92989">
    <property type="glycosylation" value="2 sites"/>
</dbReference>
<dbReference type="iPTMnet" id="Q92989"/>
<dbReference type="MetOSite" id="Q92989"/>
<dbReference type="PhosphoSitePlus" id="Q92989"/>
<dbReference type="BioMuta" id="CLP1"/>
<dbReference type="DMDM" id="13431366"/>
<dbReference type="jPOST" id="Q92989"/>
<dbReference type="MassIVE" id="Q92989"/>
<dbReference type="PaxDb" id="9606-ENSP00000434995"/>
<dbReference type="PeptideAtlas" id="Q92989"/>
<dbReference type="ProteomicsDB" id="75650">
    <molecule id="Q92989-1"/>
</dbReference>
<dbReference type="ProteomicsDB" id="75651">
    <molecule id="Q92989-2"/>
</dbReference>
<dbReference type="Pumba" id="Q92989"/>
<dbReference type="Antibodypedia" id="27467">
    <property type="antibodies" value="205 antibodies from 28 providers"/>
</dbReference>
<dbReference type="DNASU" id="10978"/>
<dbReference type="Ensembl" id="ENST00000302731.4">
    <molecule id="Q92989-2"/>
    <property type="protein sequence ID" value="ENSP00000304704.4"/>
    <property type="gene ID" value="ENSG00000172409.7"/>
</dbReference>
<dbReference type="Ensembl" id="ENST00000525602.1">
    <molecule id="Q92989-1"/>
    <property type="protein sequence ID" value="ENSP00000436066.1"/>
    <property type="gene ID" value="ENSG00000172409.7"/>
</dbReference>
<dbReference type="Ensembl" id="ENST00000533682.2">
    <molecule id="Q92989-1"/>
    <property type="protein sequence ID" value="ENSP00000434995.1"/>
    <property type="gene ID" value="ENSG00000172409.7"/>
</dbReference>
<dbReference type="Ensembl" id="ENST00000681650.1">
    <molecule id="Q92989-1"/>
    <property type="protein sequence ID" value="ENSP00000506714.1"/>
    <property type="gene ID" value="ENSG00000172409.7"/>
</dbReference>
<dbReference type="GeneID" id="10978"/>
<dbReference type="KEGG" id="hsa:10978"/>
<dbReference type="MANE-Select" id="ENST00000533682.2">
    <property type="protein sequence ID" value="ENSP00000434995.1"/>
    <property type="RefSeq nucleotide sequence ID" value="NM_006831.3"/>
    <property type="RefSeq protein sequence ID" value="NP_006822.1"/>
</dbReference>
<dbReference type="UCSC" id="uc001nkw.4">
    <molecule id="Q92989-1"/>
    <property type="organism name" value="human"/>
</dbReference>
<dbReference type="AGR" id="HGNC:16999"/>
<dbReference type="CTD" id="10978"/>
<dbReference type="DisGeNET" id="10978"/>
<dbReference type="GeneCards" id="CLP1"/>
<dbReference type="HGNC" id="HGNC:16999">
    <property type="gene designation" value="CLP1"/>
</dbReference>
<dbReference type="HPA" id="ENSG00000172409">
    <property type="expression patterns" value="Low tissue specificity"/>
</dbReference>
<dbReference type="MalaCards" id="CLP1"/>
<dbReference type="MIM" id="608757">
    <property type="type" value="gene"/>
</dbReference>
<dbReference type="MIM" id="615803">
    <property type="type" value="phenotype"/>
</dbReference>
<dbReference type="neXtProt" id="NX_Q92989"/>
<dbReference type="OpenTargets" id="ENSG00000172409"/>
<dbReference type="Orphanet" id="411493">
    <property type="disease" value="Pontocerebellar hypoplasia type 10"/>
</dbReference>
<dbReference type="PharmGKB" id="PA162382477"/>
<dbReference type="VEuPathDB" id="HostDB:ENSG00000172409"/>
<dbReference type="eggNOG" id="KOG2749">
    <property type="taxonomic scope" value="Eukaryota"/>
</dbReference>
<dbReference type="GeneTree" id="ENSGT00940000153668"/>
<dbReference type="HOGENOM" id="CLU_018195_1_0_1"/>
<dbReference type="InParanoid" id="Q92989"/>
<dbReference type="OrthoDB" id="258143at2759"/>
<dbReference type="PAN-GO" id="Q92989">
    <property type="GO annotations" value="4 GO annotations based on evolutionary models"/>
</dbReference>
<dbReference type="PhylomeDB" id="Q92989"/>
<dbReference type="TreeFam" id="TF105795"/>
<dbReference type="BRENDA" id="2.7.1.78">
    <property type="organism ID" value="2681"/>
</dbReference>
<dbReference type="PathwayCommons" id="Q92989"/>
<dbReference type="Reactome" id="R-HSA-6784531">
    <property type="pathway name" value="tRNA processing in the nucleus"/>
</dbReference>
<dbReference type="Reactome" id="R-HSA-72187">
    <property type="pathway name" value="mRNA 3'-end processing"/>
</dbReference>
<dbReference type="Reactome" id="R-HSA-72203">
    <property type="pathway name" value="Processing of Capped Intron-Containing Pre-mRNA"/>
</dbReference>
<dbReference type="Reactome" id="R-HSA-73856">
    <property type="pathway name" value="RNA Polymerase II Transcription Termination"/>
</dbReference>
<dbReference type="Reactome" id="R-HSA-77595">
    <property type="pathway name" value="Processing of Intronless Pre-mRNAs"/>
</dbReference>
<dbReference type="SignaLink" id="Q92989"/>
<dbReference type="SIGNOR" id="Q92989"/>
<dbReference type="BioGRID-ORCS" id="10978">
    <property type="hits" value="799 hits in 1163 CRISPR screens"/>
</dbReference>
<dbReference type="ChiTaRS" id="CLP1">
    <property type="organism name" value="human"/>
</dbReference>
<dbReference type="GenomeRNAi" id="10978"/>
<dbReference type="Pharos" id="Q92989">
    <property type="development level" value="Tbio"/>
</dbReference>
<dbReference type="PRO" id="PR:Q92989"/>
<dbReference type="Proteomes" id="UP000005640">
    <property type="component" value="Chromosome 11"/>
</dbReference>
<dbReference type="RNAct" id="Q92989">
    <property type="molecule type" value="protein"/>
</dbReference>
<dbReference type="Bgee" id="ENSG00000172409">
    <property type="expression patterns" value="Expressed in secondary oocyte and 194 other cell types or tissues"/>
</dbReference>
<dbReference type="ExpressionAtlas" id="Q92989">
    <property type="expression patterns" value="baseline and differential"/>
</dbReference>
<dbReference type="GO" id="GO:0005829">
    <property type="term" value="C:cytosol"/>
    <property type="evidence" value="ECO:0000314"/>
    <property type="project" value="HPA"/>
</dbReference>
<dbReference type="GO" id="GO:0005849">
    <property type="term" value="C:mRNA cleavage factor complex"/>
    <property type="evidence" value="ECO:0007669"/>
    <property type="project" value="UniProtKB-UniRule"/>
</dbReference>
<dbReference type="GO" id="GO:0005654">
    <property type="term" value="C:nucleoplasm"/>
    <property type="evidence" value="ECO:0000314"/>
    <property type="project" value="HPA"/>
</dbReference>
<dbReference type="GO" id="GO:0005634">
    <property type="term" value="C:nucleus"/>
    <property type="evidence" value="ECO:0000314"/>
    <property type="project" value="UniProtKB"/>
</dbReference>
<dbReference type="GO" id="GO:0000214">
    <property type="term" value="C:tRNA-intron endonuclease complex"/>
    <property type="evidence" value="ECO:0000314"/>
    <property type="project" value="UniProtKB"/>
</dbReference>
<dbReference type="GO" id="GO:0005524">
    <property type="term" value="F:ATP binding"/>
    <property type="evidence" value="ECO:0000304"/>
    <property type="project" value="UniProtKB"/>
</dbReference>
<dbReference type="GO" id="GO:0046404">
    <property type="term" value="F:ATP-dependent polydeoxyribonucleotide 5'-hydroxyl-kinase activity"/>
    <property type="evidence" value="ECO:0000314"/>
    <property type="project" value="GO_Central"/>
</dbReference>
<dbReference type="GO" id="GO:0051736">
    <property type="term" value="F:ATP-dependent polyribonucleotide 5'-hydroxyl-kinase activity"/>
    <property type="evidence" value="ECO:0000314"/>
    <property type="project" value="GO_Central"/>
</dbReference>
<dbReference type="GO" id="GO:0051731">
    <property type="term" value="F:polynucleotide 5'-hydroxyl-kinase activity"/>
    <property type="evidence" value="ECO:0000318"/>
    <property type="project" value="GO_Central"/>
</dbReference>
<dbReference type="GO" id="GO:0021695">
    <property type="term" value="P:cerebellar cortex development"/>
    <property type="evidence" value="ECO:0000315"/>
    <property type="project" value="UniProtKB"/>
</dbReference>
<dbReference type="GO" id="GO:0098795">
    <property type="term" value="P:global gene silencing by mRNA cleavage"/>
    <property type="evidence" value="ECO:0000315"/>
    <property type="project" value="UniProtKB"/>
</dbReference>
<dbReference type="GO" id="GO:0031124">
    <property type="term" value="P:mRNA 3'-end processing"/>
    <property type="evidence" value="ECO:0000304"/>
    <property type="project" value="UniProtKB"/>
</dbReference>
<dbReference type="GO" id="GO:0070922">
    <property type="term" value="P:RISC complex assembly"/>
    <property type="evidence" value="ECO:0000314"/>
    <property type="project" value="UniProtKB"/>
</dbReference>
<dbReference type="GO" id="GO:0006388">
    <property type="term" value="P:tRNA splicing, via endonucleolytic cleavage and ligation"/>
    <property type="evidence" value="ECO:0000314"/>
    <property type="project" value="UniProtKB"/>
</dbReference>
<dbReference type="CDD" id="cd01983">
    <property type="entry name" value="SIMIBI"/>
    <property type="match status" value="1"/>
</dbReference>
<dbReference type="FunFam" id="2.40.30.330:FF:000001">
    <property type="entry name" value="Protein CLP1 homolog"/>
    <property type="match status" value="1"/>
</dbReference>
<dbReference type="FunFam" id="3.40.50.300:FF:000454">
    <property type="entry name" value="Protein CLP1 homolog"/>
    <property type="match status" value="1"/>
</dbReference>
<dbReference type="FunFam" id="2.60.120.1030:FF:000001">
    <property type="entry name" value="Protein CLP1 homolog 5"/>
    <property type="match status" value="1"/>
</dbReference>
<dbReference type="Gene3D" id="2.60.120.1030">
    <property type="entry name" value="Clp1, DNA binding domain"/>
    <property type="match status" value="1"/>
</dbReference>
<dbReference type="Gene3D" id="3.40.50.300">
    <property type="entry name" value="P-loop containing nucleotide triphosphate hydrolases"/>
    <property type="match status" value="1"/>
</dbReference>
<dbReference type="Gene3D" id="2.40.30.330">
    <property type="entry name" value="Pre-mRNA cleavage complex subunit Clp1, C-terminal domain"/>
    <property type="match status" value="1"/>
</dbReference>
<dbReference type="HAMAP" id="MF_03035">
    <property type="entry name" value="Clp1"/>
    <property type="match status" value="1"/>
</dbReference>
<dbReference type="InterPro" id="IPR028606">
    <property type="entry name" value="Clp1"/>
</dbReference>
<dbReference type="InterPro" id="IPR045116">
    <property type="entry name" value="Clp1/Grc3"/>
</dbReference>
<dbReference type="InterPro" id="IPR010655">
    <property type="entry name" value="Clp1_C"/>
</dbReference>
<dbReference type="InterPro" id="IPR038238">
    <property type="entry name" value="Clp1_C_sf"/>
</dbReference>
<dbReference type="InterPro" id="IPR032324">
    <property type="entry name" value="Clp1_N"/>
</dbReference>
<dbReference type="InterPro" id="IPR038239">
    <property type="entry name" value="Clp1_N_sf"/>
</dbReference>
<dbReference type="InterPro" id="IPR032319">
    <property type="entry name" value="CLP1_P"/>
</dbReference>
<dbReference type="InterPro" id="IPR027417">
    <property type="entry name" value="P-loop_NTPase"/>
</dbReference>
<dbReference type="PANTHER" id="PTHR12755">
    <property type="entry name" value="CLEAVAGE/POLYADENYLATION FACTOR IA SUBUNIT CLP1P"/>
    <property type="match status" value="1"/>
</dbReference>
<dbReference type="PANTHER" id="PTHR12755:SF6">
    <property type="entry name" value="POLYRIBONUCLEOTIDE 5'-HYDROXYL-KINASE CLP1"/>
    <property type="match status" value="1"/>
</dbReference>
<dbReference type="Pfam" id="PF06807">
    <property type="entry name" value="Clp1"/>
    <property type="match status" value="1"/>
</dbReference>
<dbReference type="Pfam" id="PF16573">
    <property type="entry name" value="CLP1_N"/>
    <property type="match status" value="1"/>
</dbReference>
<dbReference type="Pfam" id="PF16575">
    <property type="entry name" value="CLP1_P"/>
    <property type="match status" value="1"/>
</dbReference>
<dbReference type="SUPFAM" id="SSF52540">
    <property type="entry name" value="P-loop containing nucleoside triphosphate hydrolases"/>
    <property type="match status" value="2"/>
</dbReference>
<evidence type="ECO:0000255" key="1">
    <source>
        <dbReference type="HAMAP-Rule" id="MF_03035"/>
    </source>
</evidence>
<evidence type="ECO:0000269" key="2">
    <source>
    </source>
</evidence>
<evidence type="ECO:0000269" key="3">
    <source>
    </source>
</evidence>
<evidence type="ECO:0000269" key="4">
    <source>
    </source>
</evidence>
<evidence type="ECO:0000269" key="5">
    <source>
    </source>
</evidence>
<evidence type="ECO:0000269" key="6">
    <source>
    </source>
</evidence>
<evidence type="ECO:0000269" key="7">
    <source>
    </source>
</evidence>
<evidence type="ECO:0000303" key="8">
    <source>
    </source>
</evidence>
<evidence type="ECO:0007829" key="9">
    <source>
        <dbReference type="PDB" id="8HMY"/>
    </source>
</evidence>
<evidence type="ECO:0007829" key="10">
    <source>
        <dbReference type="PDB" id="8HMZ"/>
    </source>
</evidence>
<protein>
    <recommendedName>
        <fullName evidence="1">Polyribonucleotide 5'-hydroxyl-kinase Clp1</fullName>
        <ecNumber evidence="1">2.7.1.78</ecNumber>
    </recommendedName>
    <alternativeName>
        <fullName evidence="1">Polyadenylation factor Clp1</fullName>
    </alternativeName>
    <alternativeName>
        <fullName evidence="1">Polynucleotide kinase Clp1</fullName>
    </alternativeName>
    <alternativeName>
        <fullName evidence="1">Pre-mRNA cleavage complex II protein Clp1</fullName>
    </alternativeName>
</protein>
<name>CLP1_HUMAN</name>
<sequence>MGEEANDDKKPTTKFELERETELRFEVEASQSVQLELLTGMAEIFGTELTRNKKFTFDAGAKVAVFTWHGCSVQLSGRTEVAYVSKDTPMLLYLNTHTALEQMRRQAEKEEERGPRVMVVGPTDVGKSTVCRLLLNYAVRLGRRPTYVELDVGQGSVSIPGTMGALYIERPADVEEGFSIQAPLVYHFGSTTPGTNIKLYNKITSRLADVFNQRCEVNRRASVSGCVINTCGWVKGSGYQALVHAASAFEVDVVVVLDQERLYNELKRDLPHFVRTVLLPKSGGVVERSKDFRRECRDERIREYFYGFRGCFYPHAFNVKFSDVKIYKVGAPTIPDSCLPLGMSQEDNQLKLVPVTPGRDMVHHLLSVSTAEGTEENLSETSVAGFIVVTSVDLEHQVFTVLSPAPRPLPKNFLLIMDIRFMDLK</sequence>
<organism>
    <name type="scientific">Homo sapiens</name>
    <name type="common">Human</name>
    <dbReference type="NCBI Taxonomy" id="9606"/>
    <lineage>
        <taxon>Eukaryota</taxon>
        <taxon>Metazoa</taxon>
        <taxon>Chordata</taxon>
        <taxon>Craniata</taxon>
        <taxon>Vertebrata</taxon>
        <taxon>Euteleostomi</taxon>
        <taxon>Mammalia</taxon>
        <taxon>Eutheria</taxon>
        <taxon>Euarchontoglires</taxon>
        <taxon>Primates</taxon>
        <taxon>Haplorrhini</taxon>
        <taxon>Catarrhini</taxon>
        <taxon>Hominidae</taxon>
        <taxon>Homo</taxon>
    </lineage>
</organism>
<gene>
    <name evidence="1" type="primary">CLP1</name>
    <name type="synonym">HEAB</name>
</gene>